<proteinExistence type="inferred from homology"/>
<accession>A6ZP10</accession>
<comment type="function">
    <text evidence="1">Cooperates with the reticulon proteins RTN1 and RTN2 and the tubule-shaping DP1 family protein YOP1 to generate and maintain the structure of the tubular endoplasmic reticulum network. Has GTPase activity, which is required for its function in ER organization.</text>
</comment>
<comment type="subunit">
    <text>Interacts with RTN1 and YOP1; GTP binding is not required for these interactions.</text>
</comment>
<comment type="subcellular location">
    <subcellularLocation>
        <location evidence="1">Endoplasmic reticulum membrane</location>
        <topology evidence="1">Multi-pass membrane protein</topology>
    </subcellularLocation>
    <text evidence="1">Enriched in the cortical ER. Concentrated in punctae along the ER tubules.</text>
</comment>
<comment type="similarity">
    <text evidence="2">Belongs to the TRAFAC class dynamin-like GTPase superfamily. GB1/RHD3 GTPase family. RHD3 subfamily.</text>
</comment>
<feature type="chain" id="PRO_0000385007" description="Protein SEY1">
    <location>
        <begin position="1"/>
        <end position="776"/>
    </location>
</feature>
<feature type="topological domain" description="Cytoplasmic" evidence="1">
    <location>
        <begin position="1"/>
        <end position="681"/>
    </location>
</feature>
<feature type="transmembrane region" description="Helical" evidence="1">
    <location>
        <begin position="682"/>
        <end position="702"/>
    </location>
</feature>
<feature type="topological domain" description="Lumenal" evidence="1">
    <location>
        <begin position="703"/>
        <end position="705"/>
    </location>
</feature>
<feature type="transmembrane region" description="Helical" evidence="1">
    <location>
        <begin position="706"/>
        <end position="726"/>
    </location>
</feature>
<feature type="topological domain" description="Cytoplasmic" evidence="1">
    <location>
        <begin position="727"/>
        <end position="776"/>
    </location>
</feature>
<feature type="domain" description="GB1/RHD3-type G" evidence="2">
    <location>
        <begin position="34"/>
        <end position="263"/>
    </location>
</feature>
<feature type="binding site" evidence="1">
    <location>
        <begin position="44"/>
        <end position="51"/>
    </location>
    <ligand>
        <name>GTP</name>
        <dbReference type="ChEBI" id="CHEBI:37565"/>
    </ligand>
</feature>
<organism>
    <name type="scientific">Saccharomyces cerevisiae (strain YJM789)</name>
    <name type="common">Baker's yeast</name>
    <dbReference type="NCBI Taxonomy" id="307796"/>
    <lineage>
        <taxon>Eukaryota</taxon>
        <taxon>Fungi</taxon>
        <taxon>Dikarya</taxon>
        <taxon>Ascomycota</taxon>
        <taxon>Saccharomycotina</taxon>
        <taxon>Saccharomycetes</taxon>
        <taxon>Saccharomycetales</taxon>
        <taxon>Saccharomycetaceae</taxon>
        <taxon>Saccharomyces</taxon>
    </lineage>
</organism>
<evidence type="ECO:0000255" key="1">
    <source>
        <dbReference type="HAMAP-Rule" id="MF_03109"/>
    </source>
</evidence>
<evidence type="ECO:0000255" key="2">
    <source>
        <dbReference type="PROSITE-ProRule" id="PRU01052"/>
    </source>
</evidence>
<keyword id="KW-0256">Endoplasmic reticulum</keyword>
<keyword id="KW-0342">GTP-binding</keyword>
<keyword id="KW-0378">Hydrolase</keyword>
<keyword id="KW-0472">Membrane</keyword>
<keyword id="KW-0547">Nucleotide-binding</keyword>
<keyword id="KW-0812">Transmembrane</keyword>
<keyword id="KW-1133">Transmembrane helix</keyword>
<protein>
    <recommendedName>
        <fullName evidence="1">Protein SEY1</fullName>
        <ecNumber evidence="1">3.6.5.-</ecNumber>
    </recommendedName>
    <alternativeName>
        <fullName evidence="1">Synthetic enhancer of YOP1 protein</fullName>
    </alternativeName>
</protein>
<name>SEY1_YEAS7</name>
<dbReference type="EC" id="3.6.5.-" evidence="1"/>
<dbReference type="EMBL" id="AAFW02000030">
    <property type="protein sequence ID" value="EDN64025.1"/>
    <property type="molecule type" value="Genomic_DNA"/>
</dbReference>
<dbReference type="SMR" id="A6ZP10"/>
<dbReference type="HOGENOM" id="CLU_011270_0_0_1"/>
<dbReference type="OrthoDB" id="19444at4893"/>
<dbReference type="Proteomes" id="UP000007060">
    <property type="component" value="Unassembled WGS sequence"/>
</dbReference>
<dbReference type="GO" id="GO:0005789">
    <property type="term" value="C:endoplasmic reticulum membrane"/>
    <property type="evidence" value="ECO:0007669"/>
    <property type="project" value="UniProtKB-SubCell"/>
</dbReference>
<dbReference type="GO" id="GO:0005525">
    <property type="term" value="F:GTP binding"/>
    <property type="evidence" value="ECO:0007669"/>
    <property type="project" value="UniProtKB-UniRule"/>
</dbReference>
<dbReference type="GO" id="GO:0003924">
    <property type="term" value="F:GTPase activity"/>
    <property type="evidence" value="ECO:0007669"/>
    <property type="project" value="UniProtKB-UniRule"/>
</dbReference>
<dbReference type="GO" id="GO:0016320">
    <property type="term" value="P:endoplasmic reticulum membrane fusion"/>
    <property type="evidence" value="ECO:0007669"/>
    <property type="project" value="TreeGrafter"/>
</dbReference>
<dbReference type="CDD" id="cd01851">
    <property type="entry name" value="GBP"/>
    <property type="match status" value="1"/>
</dbReference>
<dbReference type="FunFam" id="3.40.50.300:FF:000727">
    <property type="entry name" value="Protein SEY1 homolog"/>
    <property type="match status" value="1"/>
</dbReference>
<dbReference type="Gene3D" id="3.40.50.300">
    <property type="entry name" value="P-loop containing nucleotide triphosphate hydrolases"/>
    <property type="match status" value="1"/>
</dbReference>
<dbReference type="HAMAP" id="MF_03109">
    <property type="entry name" value="Sey1"/>
    <property type="match status" value="1"/>
</dbReference>
<dbReference type="InterPro" id="IPR030386">
    <property type="entry name" value="G_GB1_RHD3_dom"/>
</dbReference>
<dbReference type="InterPro" id="IPR027417">
    <property type="entry name" value="P-loop_NTPase"/>
</dbReference>
<dbReference type="InterPro" id="IPR008803">
    <property type="entry name" value="RHD3/Sey1"/>
</dbReference>
<dbReference type="InterPro" id="IPR046758">
    <property type="entry name" value="Sey1/RHD3-like_3HB"/>
</dbReference>
<dbReference type="PANTHER" id="PTHR45923">
    <property type="entry name" value="PROTEIN SEY1"/>
    <property type="match status" value="1"/>
</dbReference>
<dbReference type="PANTHER" id="PTHR45923:SF2">
    <property type="entry name" value="PROTEIN SEY1"/>
    <property type="match status" value="1"/>
</dbReference>
<dbReference type="Pfam" id="PF05879">
    <property type="entry name" value="RHD3_GTPase"/>
    <property type="match status" value="1"/>
</dbReference>
<dbReference type="Pfam" id="PF20428">
    <property type="entry name" value="Sey1_3HB"/>
    <property type="match status" value="1"/>
</dbReference>
<dbReference type="SUPFAM" id="SSF52540">
    <property type="entry name" value="P-loop containing nucleoside triphosphate hydrolases"/>
    <property type="match status" value="1"/>
</dbReference>
<dbReference type="PROSITE" id="PS51715">
    <property type="entry name" value="G_GB1_RHD3"/>
    <property type="match status" value="1"/>
</dbReference>
<reference key="1">
    <citation type="journal article" date="2007" name="Proc. Natl. Acad. Sci. U.S.A.">
        <title>Genome sequencing and comparative analysis of Saccharomyces cerevisiae strain YJM789.</title>
        <authorList>
            <person name="Wei W."/>
            <person name="McCusker J.H."/>
            <person name="Hyman R.W."/>
            <person name="Jones T."/>
            <person name="Ning Y."/>
            <person name="Cao Z."/>
            <person name="Gu Z."/>
            <person name="Bruno D."/>
            <person name="Miranda M."/>
            <person name="Nguyen M."/>
            <person name="Wilhelmy J."/>
            <person name="Komp C."/>
            <person name="Tamse R."/>
            <person name="Wang X."/>
            <person name="Jia P."/>
            <person name="Luedi P."/>
            <person name="Oefner P.J."/>
            <person name="David L."/>
            <person name="Dietrich F.S."/>
            <person name="Li Y."/>
            <person name="Davis R.W."/>
            <person name="Steinmetz L.M."/>
        </authorList>
    </citation>
    <scope>NUCLEOTIDE SEQUENCE [LARGE SCALE GENOMIC DNA]</scope>
    <source>
        <strain>YJM789</strain>
    </source>
</reference>
<sequence>MADRSAIQLIDEEKEFHQSALQYFQQCIGNRDVGLDYHVISVFGSQSSGKSTLLNVLFNTNFDTMDAQVKRQQTTKGIWLAHTKQVNTTIEIDNDRPDIFVLDVEGSDGSERGEDQDFERKAALFAIAVSEVLIVNMWEQQIGLYQGNNMALLKTVFEVNLSLFGKNDNDHKVLLLFVIRDHVGVTPLSSLSDSVTRELEKIWTELSKPAGCEGSSLYDYFDLKFVGLAHKLLQEDKFTQDVKKLGDSFVMKGTENYYFKPQYHHRLPLDGWTMYAENCWDQIERNKDLDLPTQQILVARFKTEEISNEALEEFISKYDESIAPLKGNLGSLTSQLVKLKEECLTKYDEQASRYARNVYMEKREALNTKLNSHISGTINEFLESLMEKLWDDLKLEVSSRDKATTSFVESVAAGKSKIEKEFNESMETFKKLGLLISNEEITCKFSDDIEERIKQLCDAELKAKIGRIKKNLVPELKDHVIHLLSHPSKKVWDDIMNDFESTIKDNISAYQVEKDKYDFKIGLSESENAKIYKNIRILAWRTLDTTVHDYLKIDTIVSILRDRFEDVFRYDAEGSPRLWKTEEEIDGAFRVAKEHALEVFEVLSLAVTSDNVEIIPDVPMAEEESGEDNEIYRDNEGVFHSRRFAHILTELQKENVLDQFRRQINITVLDSKRSIITTRTHIPPWIYVLLAVLGWNEFVAVIRNPLFVTLTLILGATFFVIHKFGLWGPVVNVVQSAVGETRTAIKDKLRQFVVEDHEVKESFEMKDFSKNEQKEK</sequence>
<gene>
    <name evidence="1" type="primary">SEY1</name>
    <name type="ORF">SCY_5228</name>
</gene>